<keyword id="KW-0150">Chloroplast</keyword>
<keyword id="KW-0472">Membrane</keyword>
<keyword id="KW-0520">NAD</keyword>
<keyword id="KW-0521">NADP</keyword>
<keyword id="KW-0934">Plastid</keyword>
<keyword id="KW-0618">Plastoquinone</keyword>
<keyword id="KW-0874">Quinone</keyword>
<keyword id="KW-0793">Thylakoid</keyword>
<keyword id="KW-1278">Translocase</keyword>
<keyword id="KW-0812">Transmembrane</keyword>
<keyword id="KW-1133">Transmembrane helix</keyword>
<keyword id="KW-0813">Transport</keyword>
<sequence>MIWHVQNENFILDSTRIFMKAFHLLLFQGSSIFPECILIFGLILLLMIDSTSDQKDRPWFYFISSTSLVISITALLFRWREEPIISFSGNFQTNNFNEIFQFLILLCSTLCIPLSVEYIECTEMAITEFLLFVLTATLGGMFLCGANDLITIFVAPECFSLCSYLLSGYTKRDLRSNEATMKYLLMGGASSSILVHGFSWLYGSSGGEIELQEIVNGLINTQMYNSPGISIALISITVGLGFKLSPAPFHQWTPDVYEGSPTPVVAFLSVTSKVAASASATRILDIPFYFSSNEWHLLLEILAILSMILGNLLAITQTSMKRMLAYSSIGQIGYVIIGIIVGDSNDGYASMITYMLFYISMNLGTFACIVLFGLRTGTDNIRDYAGLYTKDPFLALSLALCLLSLGGLPPLAGFFGKLYLFWCGWQAGLYLLVSIGLLTSVLSIYYYLKIIKLLMTGRNQEITPYVRNYRRSPLRSNNSIELSMTVCVIASTIPGISMNPILAIAQDTLF</sequence>
<name>NU2C1_AGRST</name>
<organism>
    <name type="scientific">Agrostis stolonifera</name>
    <name type="common">Creeping bentgrass</name>
    <dbReference type="NCBI Taxonomy" id="63632"/>
    <lineage>
        <taxon>Eukaryota</taxon>
        <taxon>Viridiplantae</taxon>
        <taxon>Streptophyta</taxon>
        <taxon>Embryophyta</taxon>
        <taxon>Tracheophyta</taxon>
        <taxon>Spermatophyta</taxon>
        <taxon>Magnoliopsida</taxon>
        <taxon>Liliopsida</taxon>
        <taxon>Poales</taxon>
        <taxon>Poaceae</taxon>
        <taxon>BOP clade</taxon>
        <taxon>Pooideae</taxon>
        <taxon>Poodae</taxon>
        <taxon>Poeae</taxon>
        <taxon>Poeae Chloroplast Group 1 (Aveneae type)</taxon>
        <taxon>Agrostidodinae</taxon>
        <taxon>Agrostidinae</taxon>
        <taxon>Agrostis</taxon>
    </lineage>
</organism>
<geneLocation type="chloroplast"/>
<protein>
    <recommendedName>
        <fullName evidence="1">NAD(P)H-quinone oxidoreductase subunit 2 A, chloroplastic</fullName>
        <ecNumber evidence="1">7.1.1.-</ecNumber>
    </recommendedName>
    <alternativeName>
        <fullName evidence="1">NAD(P)H dehydrogenase, subunit 2 A</fullName>
    </alternativeName>
    <alternativeName>
        <fullName evidence="1">NADH-plastoquinone oxidoreductase subunit 2 A</fullName>
    </alternativeName>
</protein>
<gene>
    <name evidence="1" type="primary">ndhB1</name>
</gene>
<proteinExistence type="inferred from homology"/>
<feature type="chain" id="PRO_0000275590" description="NAD(P)H-quinone oxidoreductase subunit 2 A, chloroplastic">
    <location>
        <begin position="1"/>
        <end position="510"/>
    </location>
</feature>
<feature type="transmembrane region" description="Helical" evidence="1">
    <location>
        <begin position="24"/>
        <end position="44"/>
    </location>
</feature>
<feature type="transmembrane region" description="Helical" evidence="1">
    <location>
        <begin position="59"/>
        <end position="79"/>
    </location>
</feature>
<feature type="transmembrane region" description="Helical" evidence="1">
    <location>
        <begin position="99"/>
        <end position="119"/>
    </location>
</feature>
<feature type="transmembrane region" description="Helical" evidence="1">
    <location>
        <begin position="124"/>
        <end position="144"/>
    </location>
</feature>
<feature type="transmembrane region" description="Helical" evidence="1">
    <location>
        <begin position="149"/>
        <end position="169"/>
    </location>
</feature>
<feature type="transmembrane region" description="Helical" evidence="1">
    <location>
        <begin position="183"/>
        <end position="203"/>
    </location>
</feature>
<feature type="transmembrane region" description="Helical" evidence="1">
    <location>
        <begin position="229"/>
        <end position="249"/>
    </location>
</feature>
<feature type="transmembrane region" description="Helical" evidence="1">
    <location>
        <begin position="295"/>
        <end position="315"/>
    </location>
</feature>
<feature type="transmembrane region" description="Helical" evidence="1">
    <location>
        <begin position="323"/>
        <end position="343"/>
    </location>
</feature>
<feature type="transmembrane region" description="Helical" evidence="1">
    <location>
        <begin position="354"/>
        <end position="374"/>
    </location>
</feature>
<feature type="transmembrane region" description="Helical" evidence="1">
    <location>
        <begin position="395"/>
        <end position="415"/>
    </location>
</feature>
<feature type="transmembrane region" description="Helical" evidence="1">
    <location>
        <begin position="418"/>
        <end position="438"/>
    </location>
</feature>
<evidence type="ECO:0000255" key="1">
    <source>
        <dbReference type="HAMAP-Rule" id="MF_00445"/>
    </source>
</evidence>
<reference key="1">
    <citation type="journal article" date="2007" name="Theor. Appl. Genet.">
        <title>Complete chloroplast genome sequences of Hordeum vulgare, Sorghum bicolor and Agrostis stolonifera, and comparative analyses with other grass genomes.</title>
        <authorList>
            <person name="Saski C."/>
            <person name="Lee S.-B."/>
            <person name="Fjellheim S."/>
            <person name="Guda C."/>
            <person name="Jansen R.K."/>
            <person name="Luo H."/>
            <person name="Tomkins J."/>
            <person name="Rognli O.A."/>
            <person name="Daniell H."/>
            <person name="Clarke J.L."/>
        </authorList>
    </citation>
    <scope>NUCLEOTIDE SEQUENCE [LARGE SCALE GENOMIC DNA]</scope>
    <source>
        <strain>cv. Penn A-4</strain>
    </source>
</reference>
<accession>P0CC23</accession>
<accession>A1EA52</accession>
<dbReference type="EC" id="7.1.1.-" evidence="1"/>
<dbReference type="EMBL" id="EF115543">
    <property type="protein sequence ID" value="ABK79623.1"/>
    <property type="molecule type" value="Genomic_DNA"/>
</dbReference>
<dbReference type="SMR" id="P0CC23"/>
<dbReference type="GO" id="GO:0009535">
    <property type="term" value="C:chloroplast thylakoid membrane"/>
    <property type="evidence" value="ECO:0007669"/>
    <property type="project" value="UniProtKB-SubCell"/>
</dbReference>
<dbReference type="GO" id="GO:0008137">
    <property type="term" value="F:NADH dehydrogenase (ubiquinone) activity"/>
    <property type="evidence" value="ECO:0007669"/>
    <property type="project" value="InterPro"/>
</dbReference>
<dbReference type="GO" id="GO:0048038">
    <property type="term" value="F:quinone binding"/>
    <property type="evidence" value="ECO:0007669"/>
    <property type="project" value="UniProtKB-KW"/>
</dbReference>
<dbReference type="GO" id="GO:0042773">
    <property type="term" value="P:ATP synthesis coupled electron transport"/>
    <property type="evidence" value="ECO:0007669"/>
    <property type="project" value="InterPro"/>
</dbReference>
<dbReference type="GO" id="GO:0019684">
    <property type="term" value="P:photosynthesis, light reaction"/>
    <property type="evidence" value="ECO:0007669"/>
    <property type="project" value="UniProtKB-UniRule"/>
</dbReference>
<dbReference type="HAMAP" id="MF_00445">
    <property type="entry name" value="NDH1_NuoN_1"/>
    <property type="match status" value="1"/>
</dbReference>
<dbReference type="InterPro" id="IPR010096">
    <property type="entry name" value="NADH-Q_OxRdtase_suN/2"/>
</dbReference>
<dbReference type="InterPro" id="IPR001750">
    <property type="entry name" value="ND/Mrp_TM"/>
</dbReference>
<dbReference type="InterPro" id="IPR045693">
    <property type="entry name" value="Ndh2_N"/>
</dbReference>
<dbReference type="NCBIfam" id="TIGR01770">
    <property type="entry name" value="NDH_I_N"/>
    <property type="match status" value="1"/>
</dbReference>
<dbReference type="NCBIfam" id="NF002701">
    <property type="entry name" value="PRK02504.1"/>
    <property type="match status" value="1"/>
</dbReference>
<dbReference type="PANTHER" id="PTHR22773">
    <property type="entry name" value="NADH DEHYDROGENASE"/>
    <property type="match status" value="1"/>
</dbReference>
<dbReference type="Pfam" id="PF19530">
    <property type="entry name" value="Ndh2_N"/>
    <property type="match status" value="1"/>
</dbReference>
<dbReference type="Pfam" id="PF00361">
    <property type="entry name" value="Proton_antipo_M"/>
    <property type="match status" value="1"/>
</dbReference>
<dbReference type="PRINTS" id="PR01434">
    <property type="entry name" value="NADHDHGNASE5"/>
</dbReference>
<comment type="function">
    <text evidence="1">NDH shuttles electrons from NAD(P)H:plastoquinone, via FMN and iron-sulfur (Fe-S) centers, to quinones in the photosynthetic chain and possibly in a chloroplast respiratory chain. The immediate electron acceptor for the enzyme in this species is believed to be plastoquinone. Couples the redox reaction to proton translocation, and thus conserves the redox energy in a proton gradient.</text>
</comment>
<comment type="catalytic activity">
    <reaction evidence="1">
        <text>a plastoquinone + NADH + (n+1) H(+)(in) = a plastoquinol + NAD(+) + n H(+)(out)</text>
        <dbReference type="Rhea" id="RHEA:42608"/>
        <dbReference type="Rhea" id="RHEA-COMP:9561"/>
        <dbReference type="Rhea" id="RHEA-COMP:9562"/>
        <dbReference type="ChEBI" id="CHEBI:15378"/>
        <dbReference type="ChEBI" id="CHEBI:17757"/>
        <dbReference type="ChEBI" id="CHEBI:57540"/>
        <dbReference type="ChEBI" id="CHEBI:57945"/>
        <dbReference type="ChEBI" id="CHEBI:62192"/>
    </reaction>
</comment>
<comment type="catalytic activity">
    <reaction evidence="1">
        <text>a plastoquinone + NADPH + (n+1) H(+)(in) = a plastoquinol + NADP(+) + n H(+)(out)</text>
        <dbReference type="Rhea" id="RHEA:42612"/>
        <dbReference type="Rhea" id="RHEA-COMP:9561"/>
        <dbReference type="Rhea" id="RHEA-COMP:9562"/>
        <dbReference type="ChEBI" id="CHEBI:15378"/>
        <dbReference type="ChEBI" id="CHEBI:17757"/>
        <dbReference type="ChEBI" id="CHEBI:57783"/>
        <dbReference type="ChEBI" id="CHEBI:58349"/>
        <dbReference type="ChEBI" id="CHEBI:62192"/>
    </reaction>
</comment>
<comment type="subunit">
    <text evidence="1">NDH is composed of at least 16 different subunits, 5 of which are encoded in the nucleus.</text>
</comment>
<comment type="subcellular location">
    <subcellularLocation>
        <location evidence="1">Plastid</location>
        <location evidence="1">Chloroplast thylakoid membrane</location>
        <topology evidence="1">Multi-pass membrane protein</topology>
    </subcellularLocation>
</comment>
<comment type="similarity">
    <text evidence="1">Belongs to the complex I subunit 2 family.</text>
</comment>